<gene>
    <name evidence="1" type="primary">grpE</name>
    <name type="ordered locus">LL0953</name>
    <name type="ORF">L0273</name>
</gene>
<organism>
    <name type="scientific">Lactococcus lactis subsp. lactis (strain IL1403)</name>
    <name type="common">Streptococcus lactis</name>
    <dbReference type="NCBI Taxonomy" id="272623"/>
    <lineage>
        <taxon>Bacteria</taxon>
        <taxon>Bacillati</taxon>
        <taxon>Bacillota</taxon>
        <taxon>Bacilli</taxon>
        <taxon>Lactobacillales</taxon>
        <taxon>Streptococcaceae</taxon>
        <taxon>Lactococcus</taxon>
    </lineage>
</organism>
<reference key="1">
    <citation type="journal article" date="2001" name="Genome Res.">
        <title>The complete genome sequence of the lactic acid bacterium Lactococcus lactis ssp. lactis IL1403.</title>
        <authorList>
            <person name="Bolotin A."/>
            <person name="Wincker P."/>
            <person name="Mauger S."/>
            <person name="Jaillon O."/>
            <person name="Malarme K."/>
            <person name="Weissenbach J."/>
            <person name="Ehrlich S.D."/>
            <person name="Sorokin A."/>
        </authorList>
    </citation>
    <scope>NUCLEOTIDE SEQUENCE [LARGE SCALE GENOMIC DNA]</scope>
    <source>
        <strain>IL1403</strain>
    </source>
</reference>
<comment type="function">
    <text evidence="1">Participates actively in the response to hyperosmotic and heat shock by preventing the aggregation of stress-denatured proteins, in association with DnaK and GrpE. It is the nucleotide exchange factor for DnaK and may function as a thermosensor. Unfolded proteins bind initially to DnaJ; upon interaction with the DnaJ-bound protein, DnaK hydrolyzes its bound ATP, resulting in the formation of a stable complex. GrpE releases ADP from DnaK; ATP binding to DnaK triggers the release of the substrate protein, thus completing the reaction cycle. Several rounds of ATP-dependent interactions between DnaJ, DnaK and GrpE are required for fully efficient folding.</text>
</comment>
<comment type="subunit">
    <text evidence="1">Homodimer.</text>
</comment>
<comment type="subcellular location">
    <subcellularLocation>
        <location evidence="1">Cytoplasm</location>
    </subcellularLocation>
</comment>
<comment type="similarity">
    <text evidence="1">Belongs to the GrpE family.</text>
</comment>
<accession>Q9CGY9</accession>
<name>GRPE_LACLA</name>
<sequence length="179" mass="20581">MSEETKEEIKNEKVDEEVTEELTEEALEDIVEEEINELDEAQKLATEWENKFLRVSAEMQNVQRRGNEERLQLIKYRSQDLAKKILSSLDNLERALAVEGLTDDVKKGLEMVQESLISALKEEGVEEVSYESFDHNIHMAVQTVPADDEHPADSIVQVFQKGYQLHERLLRPAMVVVAQ</sequence>
<keyword id="KW-0143">Chaperone</keyword>
<keyword id="KW-0963">Cytoplasm</keyword>
<keyword id="KW-1185">Reference proteome</keyword>
<keyword id="KW-0346">Stress response</keyword>
<feature type="chain" id="PRO_0000113799" description="Protein GrpE">
    <location>
        <begin position="1"/>
        <end position="179"/>
    </location>
</feature>
<feature type="region of interest" description="Disordered" evidence="2">
    <location>
        <begin position="1"/>
        <end position="20"/>
    </location>
</feature>
<dbReference type="EMBL" id="AE005176">
    <property type="protein sequence ID" value="AAK05051.1"/>
    <property type="molecule type" value="Genomic_DNA"/>
</dbReference>
<dbReference type="PIR" id="A86744">
    <property type="entry name" value="A86744"/>
</dbReference>
<dbReference type="RefSeq" id="NP_267109.1">
    <property type="nucleotide sequence ID" value="NC_002662.1"/>
</dbReference>
<dbReference type="RefSeq" id="WP_010905651.1">
    <property type="nucleotide sequence ID" value="NC_002662.1"/>
</dbReference>
<dbReference type="SMR" id="Q9CGY9"/>
<dbReference type="PaxDb" id="272623-L0273"/>
<dbReference type="EnsemblBacteria" id="AAK05051">
    <property type="protein sequence ID" value="AAK05051"/>
    <property type="gene ID" value="L0273"/>
</dbReference>
<dbReference type="KEGG" id="lla:L0273"/>
<dbReference type="PATRIC" id="fig|272623.7.peg.1020"/>
<dbReference type="eggNOG" id="COG0576">
    <property type="taxonomic scope" value="Bacteria"/>
</dbReference>
<dbReference type="HOGENOM" id="CLU_057217_6_3_9"/>
<dbReference type="OrthoDB" id="9812586at2"/>
<dbReference type="Proteomes" id="UP000002196">
    <property type="component" value="Chromosome"/>
</dbReference>
<dbReference type="GO" id="GO:0009986">
    <property type="term" value="C:cell surface"/>
    <property type="evidence" value="ECO:0000314"/>
    <property type="project" value="CAFA"/>
</dbReference>
<dbReference type="GO" id="GO:0005737">
    <property type="term" value="C:cytoplasm"/>
    <property type="evidence" value="ECO:0007669"/>
    <property type="project" value="UniProtKB-SubCell"/>
</dbReference>
<dbReference type="GO" id="GO:0000774">
    <property type="term" value="F:adenyl-nucleotide exchange factor activity"/>
    <property type="evidence" value="ECO:0007669"/>
    <property type="project" value="InterPro"/>
</dbReference>
<dbReference type="GO" id="GO:2001065">
    <property type="term" value="F:mannan binding"/>
    <property type="evidence" value="ECO:0000314"/>
    <property type="project" value="CAFA"/>
</dbReference>
<dbReference type="GO" id="GO:0042803">
    <property type="term" value="F:protein homodimerization activity"/>
    <property type="evidence" value="ECO:0007669"/>
    <property type="project" value="InterPro"/>
</dbReference>
<dbReference type="GO" id="GO:0051087">
    <property type="term" value="F:protein-folding chaperone binding"/>
    <property type="evidence" value="ECO:0007669"/>
    <property type="project" value="InterPro"/>
</dbReference>
<dbReference type="GO" id="GO:0051082">
    <property type="term" value="F:unfolded protein binding"/>
    <property type="evidence" value="ECO:0007669"/>
    <property type="project" value="TreeGrafter"/>
</dbReference>
<dbReference type="GO" id="GO:0006457">
    <property type="term" value="P:protein folding"/>
    <property type="evidence" value="ECO:0007669"/>
    <property type="project" value="InterPro"/>
</dbReference>
<dbReference type="CDD" id="cd00446">
    <property type="entry name" value="GrpE"/>
    <property type="match status" value="1"/>
</dbReference>
<dbReference type="FunFam" id="2.30.22.10:FF:000001">
    <property type="entry name" value="Protein GrpE"/>
    <property type="match status" value="1"/>
</dbReference>
<dbReference type="Gene3D" id="3.90.20.20">
    <property type="match status" value="1"/>
</dbReference>
<dbReference type="Gene3D" id="2.30.22.10">
    <property type="entry name" value="Head domain of nucleotide exchange factor GrpE"/>
    <property type="match status" value="1"/>
</dbReference>
<dbReference type="HAMAP" id="MF_01151">
    <property type="entry name" value="GrpE"/>
    <property type="match status" value="1"/>
</dbReference>
<dbReference type="InterPro" id="IPR000740">
    <property type="entry name" value="GrpE"/>
</dbReference>
<dbReference type="InterPro" id="IPR013805">
    <property type="entry name" value="GrpE_coiled_coil"/>
</dbReference>
<dbReference type="InterPro" id="IPR009012">
    <property type="entry name" value="GrpE_head"/>
</dbReference>
<dbReference type="NCBIfam" id="NF010738">
    <property type="entry name" value="PRK14140.1"/>
    <property type="match status" value="1"/>
</dbReference>
<dbReference type="NCBIfam" id="NF010753">
    <property type="entry name" value="PRK14156.1"/>
    <property type="match status" value="1"/>
</dbReference>
<dbReference type="NCBIfam" id="NF010759">
    <property type="entry name" value="PRK14162.1"/>
    <property type="match status" value="1"/>
</dbReference>
<dbReference type="PANTHER" id="PTHR21237">
    <property type="entry name" value="GRPE PROTEIN"/>
    <property type="match status" value="1"/>
</dbReference>
<dbReference type="PANTHER" id="PTHR21237:SF23">
    <property type="entry name" value="GRPE PROTEIN HOMOLOG, MITOCHONDRIAL"/>
    <property type="match status" value="1"/>
</dbReference>
<dbReference type="Pfam" id="PF01025">
    <property type="entry name" value="GrpE"/>
    <property type="match status" value="1"/>
</dbReference>
<dbReference type="PRINTS" id="PR00773">
    <property type="entry name" value="GRPEPROTEIN"/>
</dbReference>
<dbReference type="SUPFAM" id="SSF58014">
    <property type="entry name" value="Coiled-coil domain of nucleotide exchange factor GrpE"/>
    <property type="match status" value="1"/>
</dbReference>
<dbReference type="SUPFAM" id="SSF51064">
    <property type="entry name" value="Head domain of nucleotide exchange factor GrpE"/>
    <property type="match status" value="1"/>
</dbReference>
<dbReference type="PROSITE" id="PS01071">
    <property type="entry name" value="GRPE"/>
    <property type="match status" value="1"/>
</dbReference>
<proteinExistence type="inferred from homology"/>
<evidence type="ECO:0000255" key="1">
    <source>
        <dbReference type="HAMAP-Rule" id="MF_01151"/>
    </source>
</evidence>
<evidence type="ECO:0000256" key="2">
    <source>
        <dbReference type="SAM" id="MobiDB-lite"/>
    </source>
</evidence>
<protein>
    <recommendedName>
        <fullName evidence="1">Protein GrpE</fullName>
    </recommendedName>
    <alternativeName>
        <fullName evidence="1">HSP-70 cofactor</fullName>
    </alternativeName>
</protein>